<protein>
    <recommendedName>
        <fullName evidence="1">Small ribosomal subunit protein uS7</fullName>
    </recommendedName>
    <alternativeName>
        <fullName evidence="2">30S ribosomal protein S7</fullName>
    </alternativeName>
</protein>
<accession>Q0VSL9</accession>
<sequence>MPRRRVVAKREILPDPKFGSQILAKFMNHVMVSGKKSVSERIVYGALDIITERKGLDSLETFEKALDNIRPAVEVKSRRVGGATYQVPVEVRPSRRTALAMRWLVDAARKRGEKSMPARLAGEVMDAAEGKGAAMKKREDVHRMAEANKAFSHFRF</sequence>
<gene>
    <name evidence="1" type="primary">rpsG</name>
    <name type="ordered locus">ABO_0381</name>
</gene>
<evidence type="ECO:0000255" key="1">
    <source>
        <dbReference type="HAMAP-Rule" id="MF_00480"/>
    </source>
</evidence>
<evidence type="ECO:0000305" key="2"/>
<comment type="function">
    <text evidence="1">One of the primary rRNA binding proteins, it binds directly to 16S rRNA where it nucleates assembly of the head domain of the 30S subunit. Is located at the subunit interface close to the decoding center, probably blocks exit of the E-site tRNA.</text>
</comment>
<comment type="subunit">
    <text evidence="1">Part of the 30S ribosomal subunit. Contacts proteins S9 and S11.</text>
</comment>
<comment type="similarity">
    <text evidence="1">Belongs to the universal ribosomal protein uS7 family.</text>
</comment>
<organism>
    <name type="scientific">Alcanivorax borkumensis (strain ATCC 700651 / DSM 11573 / NCIMB 13689 / SK2)</name>
    <dbReference type="NCBI Taxonomy" id="393595"/>
    <lineage>
        <taxon>Bacteria</taxon>
        <taxon>Pseudomonadati</taxon>
        <taxon>Pseudomonadota</taxon>
        <taxon>Gammaproteobacteria</taxon>
        <taxon>Oceanospirillales</taxon>
        <taxon>Alcanivoracaceae</taxon>
        <taxon>Alcanivorax</taxon>
    </lineage>
</organism>
<keyword id="KW-1185">Reference proteome</keyword>
<keyword id="KW-0687">Ribonucleoprotein</keyword>
<keyword id="KW-0689">Ribosomal protein</keyword>
<keyword id="KW-0694">RNA-binding</keyword>
<keyword id="KW-0699">rRNA-binding</keyword>
<keyword id="KW-0820">tRNA-binding</keyword>
<feature type="chain" id="PRO_1000014140" description="Small ribosomal subunit protein uS7">
    <location>
        <begin position="1"/>
        <end position="156"/>
    </location>
</feature>
<dbReference type="EMBL" id="AM286690">
    <property type="protein sequence ID" value="CAL15829.1"/>
    <property type="molecule type" value="Genomic_DNA"/>
</dbReference>
<dbReference type="RefSeq" id="WP_011587676.1">
    <property type="nucleotide sequence ID" value="NC_008260.1"/>
</dbReference>
<dbReference type="SMR" id="Q0VSL9"/>
<dbReference type="STRING" id="393595.ABO_0381"/>
<dbReference type="KEGG" id="abo:ABO_0381"/>
<dbReference type="eggNOG" id="COG0049">
    <property type="taxonomic scope" value="Bacteria"/>
</dbReference>
<dbReference type="HOGENOM" id="CLU_072226_1_1_6"/>
<dbReference type="OrthoDB" id="9807653at2"/>
<dbReference type="Proteomes" id="UP000008871">
    <property type="component" value="Chromosome"/>
</dbReference>
<dbReference type="GO" id="GO:0015935">
    <property type="term" value="C:small ribosomal subunit"/>
    <property type="evidence" value="ECO:0007669"/>
    <property type="project" value="InterPro"/>
</dbReference>
<dbReference type="GO" id="GO:0019843">
    <property type="term" value="F:rRNA binding"/>
    <property type="evidence" value="ECO:0007669"/>
    <property type="project" value="UniProtKB-UniRule"/>
</dbReference>
<dbReference type="GO" id="GO:0003735">
    <property type="term" value="F:structural constituent of ribosome"/>
    <property type="evidence" value="ECO:0007669"/>
    <property type="project" value="InterPro"/>
</dbReference>
<dbReference type="GO" id="GO:0000049">
    <property type="term" value="F:tRNA binding"/>
    <property type="evidence" value="ECO:0007669"/>
    <property type="project" value="UniProtKB-UniRule"/>
</dbReference>
<dbReference type="GO" id="GO:0006412">
    <property type="term" value="P:translation"/>
    <property type="evidence" value="ECO:0007669"/>
    <property type="project" value="UniProtKB-UniRule"/>
</dbReference>
<dbReference type="CDD" id="cd14869">
    <property type="entry name" value="uS7_Bacteria"/>
    <property type="match status" value="1"/>
</dbReference>
<dbReference type="FunFam" id="1.10.455.10:FF:000001">
    <property type="entry name" value="30S ribosomal protein S7"/>
    <property type="match status" value="1"/>
</dbReference>
<dbReference type="Gene3D" id="1.10.455.10">
    <property type="entry name" value="Ribosomal protein S7 domain"/>
    <property type="match status" value="1"/>
</dbReference>
<dbReference type="HAMAP" id="MF_00480_B">
    <property type="entry name" value="Ribosomal_uS7_B"/>
    <property type="match status" value="1"/>
</dbReference>
<dbReference type="InterPro" id="IPR000235">
    <property type="entry name" value="Ribosomal_uS7"/>
</dbReference>
<dbReference type="InterPro" id="IPR005717">
    <property type="entry name" value="Ribosomal_uS7_bac/org-type"/>
</dbReference>
<dbReference type="InterPro" id="IPR020606">
    <property type="entry name" value="Ribosomal_uS7_CS"/>
</dbReference>
<dbReference type="InterPro" id="IPR023798">
    <property type="entry name" value="Ribosomal_uS7_dom"/>
</dbReference>
<dbReference type="InterPro" id="IPR036823">
    <property type="entry name" value="Ribosomal_uS7_dom_sf"/>
</dbReference>
<dbReference type="NCBIfam" id="TIGR01029">
    <property type="entry name" value="rpsG_bact"/>
    <property type="match status" value="1"/>
</dbReference>
<dbReference type="PANTHER" id="PTHR11205">
    <property type="entry name" value="RIBOSOMAL PROTEIN S7"/>
    <property type="match status" value="1"/>
</dbReference>
<dbReference type="Pfam" id="PF00177">
    <property type="entry name" value="Ribosomal_S7"/>
    <property type="match status" value="1"/>
</dbReference>
<dbReference type="PIRSF" id="PIRSF002122">
    <property type="entry name" value="RPS7p_RPS7a_RPS5e_RPS7o"/>
    <property type="match status" value="1"/>
</dbReference>
<dbReference type="SUPFAM" id="SSF47973">
    <property type="entry name" value="Ribosomal protein S7"/>
    <property type="match status" value="1"/>
</dbReference>
<dbReference type="PROSITE" id="PS00052">
    <property type="entry name" value="RIBOSOMAL_S7"/>
    <property type="match status" value="1"/>
</dbReference>
<reference key="1">
    <citation type="journal article" date="2006" name="Nat. Biotechnol.">
        <title>Genome sequence of the ubiquitous hydrocarbon-degrading marine bacterium Alcanivorax borkumensis.</title>
        <authorList>
            <person name="Schneiker S."/>
            <person name="Martins dos Santos V.A.P."/>
            <person name="Bartels D."/>
            <person name="Bekel T."/>
            <person name="Brecht M."/>
            <person name="Buhrmester J."/>
            <person name="Chernikova T.N."/>
            <person name="Denaro R."/>
            <person name="Ferrer M."/>
            <person name="Gertler C."/>
            <person name="Goesmann A."/>
            <person name="Golyshina O.V."/>
            <person name="Kaminski F."/>
            <person name="Khachane A.N."/>
            <person name="Lang S."/>
            <person name="Linke B."/>
            <person name="McHardy A.C."/>
            <person name="Meyer F."/>
            <person name="Nechitaylo T."/>
            <person name="Puehler A."/>
            <person name="Regenhardt D."/>
            <person name="Rupp O."/>
            <person name="Sabirova J.S."/>
            <person name="Selbitschka W."/>
            <person name="Yakimov M.M."/>
            <person name="Timmis K.N."/>
            <person name="Vorhoelter F.-J."/>
            <person name="Weidner S."/>
            <person name="Kaiser O."/>
            <person name="Golyshin P.N."/>
        </authorList>
    </citation>
    <scope>NUCLEOTIDE SEQUENCE [LARGE SCALE GENOMIC DNA]</scope>
    <source>
        <strain>ATCC 700651 / DSM 11573 / NCIMB 13689 / SK2</strain>
    </source>
</reference>
<name>RS7_ALCBS</name>
<proteinExistence type="inferred from homology"/>